<gene>
    <name type="primary">SERPINB10</name>
</gene>
<sequence>MDPLASSISQFALEFSKELAASAAGKNIFFSPWSISSALAMVYLGARGTTAVEMAKVLQLNRDQADKTGPESEKKRKMEFNLGKAEEIHCDFQTLISEILKPTDAHVLKTANGIYGEKTYPFHNKYLEEVKTYFGAEPQSVNFVEASDQIRKEINSWVESQTQGKILNLLPDDSVDSTTRMILVNALYFKGTWEHQFLAQNTTEKPFRINETTSKPVQMMSMKEKLHVFHIEKPQATGLQLYYERRDVSLFILLPEDLGGLEQLEKAITYEKLNEWTSADMMELYDVQLSLPKFKLEESYDLKSTLSSMGMSDAFNPSKADFSGMSLERNLYLSNIFHKVFVEINEEGTEAAAGTGSEVGFRIKYPSIEFNVDHPFLFFIRHNKTNSILFYGRFCSP</sequence>
<reference key="1">
    <citation type="submission" date="2011-03" db="EMBL/GenBank/DDBJ databases">
        <title>Version 3 of the genome sequence of Otolemur garnettii(Bushbaby).</title>
        <authorList>
            <consortium name="The Broad Institute Genome Sequencing Platform"/>
            <person name="Di Palma F."/>
            <person name="Johnson J."/>
            <person name="Lander E.S."/>
            <person name="Lindblad-Toh K."/>
            <person name="Jaffe D.B."/>
            <person name="Gnerre S."/>
            <person name="MacCallum I."/>
            <person name="Przybylski D."/>
            <person name="Ribeiro F.J."/>
            <person name="Burton J.N."/>
            <person name="Walker B.J."/>
            <person name="Sharpe T."/>
            <person name="Hall G."/>
        </authorList>
    </citation>
    <scope>NUCLEOTIDE SEQUENCE [LARGE SCALE GENOMIC DNA]</scope>
</reference>
<feature type="chain" id="PRO_0000355547" description="Serpin B10">
    <location>
        <begin position="1"/>
        <end position="397"/>
    </location>
</feature>
<feature type="short sequence motif" description="Nuclear localization signal" evidence="1">
    <location>
        <begin position="74"/>
        <end position="77"/>
    </location>
</feature>
<feature type="site" description="Reactive bond" evidence="1">
    <location>
        <begin position="362"/>
        <end position="363"/>
    </location>
</feature>
<dbReference type="EMBL" id="DP000877">
    <property type="protein sequence ID" value="ACG64313.1"/>
    <property type="molecule type" value="Genomic_DNA"/>
</dbReference>
<dbReference type="SMR" id="B4USX2"/>
<dbReference type="FunCoup" id="B4USX2">
    <property type="interactions" value="58"/>
</dbReference>
<dbReference type="STRING" id="30611.ENSOGAP00000014912"/>
<dbReference type="MEROPS" id="I04.015"/>
<dbReference type="eggNOG" id="KOG2392">
    <property type="taxonomic scope" value="Eukaryota"/>
</dbReference>
<dbReference type="InParanoid" id="B4USX2"/>
<dbReference type="Proteomes" id="UP000005225">
    <property type="component" value="Unassembled WGS sequence"/>
</dbReference>
<dbReference type="GO" id="GO:0005737">
    <property type="term" value="C:cytoplasm"/>
    <property type="evidence" value="ECO:0007669"/>
    <property type="project" value="UniProtKB-SubCell"/>
</dbReference>
<dbReference type="GO" id="GO:0005615">
    <property type="term" value="C:extracellular space"/>
    <property type="evidence" value="ECO:0007669"/>
    <property type="project" value="InterPro"/>
</dbReference>
<dbReference type="GO" id="GO:0005634">
    <property type="term" value="C:nucleus"/>
    <property type="evidence" value="ECO:0007669"/>
    <property type="project" value="UniProtKB-SubCell"/>
</dbReference>
<dbReference type="GO" id="GO:0004867">
    <property type="term" value="F:serine-type endopeptidase inhibitor activity"/>
    <property type="evidence" value="ECO:0007669"/>
    <property type="project" value="UniProtKB-KW"/>
</dbReference>
<dbReference type="CDD" id="cd19569">
    <property type="entry name" value="serpinB10_bomapin"/>
    <property type="match status" value="1"/>
</dbReference>
<dbReference type="FunFam" id="2.30.39.10:FF:000035">
    <property type="entry name" value="Serine protease inhibitor (serpin) 16"/>
    <property type="match status" value="1"/>
</dbReference>
<dbReference type="FunFam" id="3.30.497.10:FF:000004">
    <property type="entry name" value="Serpin family B member 1"/>
    <property type="match status" value="1"/>
</dbReference>
<dbReference type="FunFam" id="2.30.39.10:FF:000001">
    <property type="entry name" value="Serpin family B member 2"/>
    <property type="match status" value="1"/>
</dbReference>
<dbReference type="Gene3D" id="2.30.39.10">
    <property type="entry name" value="Alpha-1-antitrypsin, domain 1"/>
    <property type="match status" value="1"/>
</dbReference>
<dbReference type="Gene3D" id="3.30.497.10">
    <property type="entry name" value="Antithrombin, subunit I, domain 2"/>
    <property type="match status" value="1"/>
</dbReference>
<dbReference type="InterPro" id="IPR023795">
    <property type="entry name" value="Serpin_CS"/>
</dbReference>
<dbReference type="InterPro" id="IPR023796">
    <property type="entry name" value="Serpin_dom"/>
</dbReference>
<dbReference type="InterPro" id="IPR000215">
    <property type="entry name" value="Serpin_fam"/>
</dbReference>
<dbReference type="InterPro" id="IPR036186">
    <property type="entry name" value="Serpin_sf"/>
</dbReference>
<dbReference type="InterPro" id="IPR042178">
    <property type="entry name" value="Serpin_sf_1"/>
</dbReference>
<dbReference type="InterPro" id="IPR042185">
    <property type="entry name" value="Serpin_sf_2"/>
</dbReference>
<dbReference type="PANTHER" id="PTHR11461">
    <property type="entry name" value="SERINE PROTEASE INHIBITOR, SERPIN"/>
    <property type="match status" value="1"/>
</dbReference>
<dbReference type="PANTHER" id="PTHR11461:SF175">
    <property type="entry name" value="SERPIN B10"/>
    <property type="match status" value="1"/>
</dbReference>
<dbReference type="Pfam" id="PF00079">
    <property type="entry name" value="Serpin"/>
    <property type="match status" value="1"/>
</dbReference>
<dbReference type="SMART" id="SM00093">
    <property type="entry name" value="SERPIN"/>
    <property type="match status" value="1"/>
</dbReference>
<dbReference type="SUPFAM" id="SSF56574">
    <property type="entry name" value="Serpins"/>
    <property type="match status" value="1"/>
</dbReference>
<dbReference type="PROSITE" id="PS00284">
    <property type="entry name" value="SERPIN"/>
    <property type="match status" value="1"/>
</dbReference>
<comment type="function">
    <text evidence="1">Protease inhibitor that may play a role in the regulation of protease activities during hematopoiesis and apoptosis induced by TNF. May regulate protease activities in the cytoplasm and in the nucleus (By similarity).</text>
</comment>
<comment type="subcellular location">
    <subcellularLocation>
        <location evidence="1">Nucleus</location>
    </subcellularLocation>
    <subcellularLocation>
        <location evidence="1">Cytoplasm</location>
    </subcellularLocation>
</comment>
<comment type="similarity">
    <text evidence="2">Belongs to the serpin family. Ov-serpin subfamily.</text>
</comment>
<evidence type="ECO:0000250" key="1"/>
<evidence type="ECO:0000305" key="2"/>
<name>SPB10_OTOGA</name>
<keyword id="KW-0963">Cytoplasm</keyword>
<keyword id="KW-0539">Nucleus</keyword>
<keyword id="KW-0646">Protease inhibitor</keyword>
<keyword id="KW-1185">Reference proteome</keyword>
<keyword id="KW-0722">Serine protease inhibitor</keyword>
<organism>
    <name type="scientific">Otolemur garnettii</name>
    <name type="common">Small-eared galago</name>
    <name type="synonym">Garnett's greater bushbaby</name>
    <dbReference type="NCBI Taxonomy" id="30611"/>
    <lineage>
        <taxon>Eukaryota</taxon>
        <taxon>Metazoa</taxon>
        <taxon>Chordata</taxon>
        <taxon>Craniata</taxon>
        <taxon>Vertebrata</taxon>
        <taxon>Euteleostomi</taxon>
        <taxon>Mammalia</taxon>
        <taxon>Eutheria</taxon>
        <taxon>Euarchontoglires</taxon>
        <taxon>Primates</taxon>
        <taxon>Strepsirrhini</taxon>
        <taxon>Lorisiformes</taxon>
        <taxon>Galagidae</taxon>
        <taxon>Otolemur</taxon>
    </lineage>
</organism>
<proteinExistence type="inferred from homology"/>
<protein>
    <recommendedName>
        <fullName>Serpin B10</fullName>
    </recommendedName>
</protein>
<accession>B4USX2</accession>